<organism>
    <name type="scientific">Chlorobaculum tepidum (strain ATCC 49652 / DSM 12025 / NBRC 103806 / TLS)</name>
    <name type="common">Chlorobium tepidum</name>
    <dbReference type="NCBI Taxonomy" id="194439"/>
    <lineage>
        <taxon>Bacteria</taxon>
        <taxon>Pseudomonadati</taxon>
        <taxon>Chlorobiota</taxon>
        <taxon>Chlorobiia</taxon>
        <taxon>Chlorobiales</taxon>
        <taxon>Chlorobiaceae</taxon>
        <taxon>Chlorobaculum</taxon>
    </lineage>
</organism>
<accession>Q8KC85</accession>
<comment type="function">
    <text evidence="4">Involved in the biosynthesis of the iron-molybdenum cofactor (FeMo-co or M-cluster) found in the dinitrogenase enzyme of the nitrogenase complex in nitrogen-fixing microorganisms. NifB catalyzes the crucial step of radical SAM-dependent carbide insertion that occurs concomitant with the insertion of a 9th sulfur and the rearrangement/coupling of two [4Fe-4S] clusters into a [8Fe-9S-C] cluster, the precursor to the M-cluster.</text>
</comment>
<comment type="cofactor">
    <cofactor evidence="4">
        <name>[4Fe-4S] cluster</name>
        <dbReference type="ChEBI" id="CHEBI:49883"/>
    </cofactor>
    <text evidence="1">Binds 3 [4Fe-4S] clusters per monomer. One cluster is coordinated with 3 cysteines and an exchangeable S-adenosyl-L-methionine. The two others probably act as substrate.</text>
</comment>
<comment type="pathway">
    <text evidence="7">Cofactor biosynthesis; Fe-Mo cofactor biosynthesis.</text>
</comment>
<comment type="subunit">
    <text evidence="4">Monomer.</text>
</comment>
<comment type="similarity">
    <text evidence="6">Belongs to the radical SAM superfamily. NifB family.</text>
</comment>
<sequence>MTLNIKNHPCFNDSSRHTYGRIHLPVAPKCNIQCNYCNRKFDCMNENRPGITSKVLSPRQALYYLDNALKLSPNISVVGIAGPGDPFANPEETMETLRLVREKYPEMLLCVATNGLDMLPYIEELAELQVSHVTLTINAIDPEIGQEIYAWVRYQKKMYRDRQAAELLLENQLAALQKLKRYGVTAKVNSIIIPGVNDQHVIEVARQVASMGADILNALPYYNTTETVFENIPEPDPMMVRKIQEEAGKLLPQMKHCARCRADAVGIIGEINSDEMMAKLAEAALMPKNPDEHRPYIAVASLEGVLINQHLGEADRFLVYALDEEKKSCTLVDSRQAPPPGGGKLRWEALAAKLSDCRAVLVNSAGDSPQSVLKASGIDVMSIEGVIEEAVYGVFTGQNLKHLMKSSQIHACKTSCGGDGNGCD</sequence>
<proteinExistence type="evidence at protein level"/>
<reference key="1">
    <citation type="journal article" date="2002" name="Proc. Natl. Acad. Sci. U.S.A.">
        <title>The complete genome sequence of Chlorobium tepidum TLS, a photosynthetic, anaerobic, green-sulfur bacterium.</title>
        <authorList>
            <person name="Eisen J.A."/>
            <person name="Nelson K.E."/>
            <person name="Paulsen I.T."/>
            <person name="Heidelberg J.F."/>
            <person name="Wu M."/>
            <person name="Dodson R.J."/>
            <person name="DeBoy R.T."/>
            <person name="Gwinn M.L."/>
            <person name="Nelson W.C."/>
            <person name="Haft D.H."/>
            <person name="Hickey E.K."/>
            <person name="Peterson J.D."/>
            <person name="Durkin A.S."/>
            <person name="Kolonay J.F."/>
            <person name="Yang F."/>
            <person name="Holt I.E."/>
            <person name="Umayam L.A."/>
            <person name="Mason T.M."/>
            <person name="Brenner M."/>
            <person name="Shea T.P."/>
            <person name="Parksey D.S."/>
            <person name="Nierman W.C."/>
            <person name="Feldblyum T.V."/>
            <person name="Hansen C.L."/>
            <person name="Craven M.B."/>
            <person name="Radune D."/>
            <person name="Vamathevan J.J."/>
            <person name="Khouri H.M."/>
            <person name="White O."/>
            <person name="Gruber T.M."/>
            <person name="Ketchum K.A."/>
            <person name="Venter J.C."/>
            <person name="Tettelin H."/>
            <person name="Bryant D.A."/>
            <person name="Fraser C.M."/>
        </authorList>
    </citation>
    <scope>NUCLEOTIDE SEQUENCE [LARGE SCALE GENOMIC DNA]</scope>
    <source>
        <strain>ATCC 49652 / DSM 12025 / NBRC 103806 / TLS</strain>
    </source>
</reference>
<reference key="2">
    <citation type="journal article" date="2017" name="Front. Plant Sci.">
        <title>Diversity and Functional Analysis of the FeMo-Cofactor Maturase NifB.</title>
        <authorList>
            <person name="Arragain S."/>
            <person name="Jimenez-Vicente E."/>
            <person name="Scandurra A.A."/>
            <person name="Buren S."/>
            <person name="Rubio L.M."/>
            <person name="Echavarri-Erasun C."/>
        </authorList>
    </citation>
    <scope>FUNCTION</scope>
    <scope>COFACTOR</scope>
    <scope>SUBUNIT</scope>
    <scope>PATHWAY</scope>
    <source>
        <strain>ATCC 49652 / DSM 12025 / NBRC 103806 / TLS</strain>
    </source>
</reference>
<keyword id="KW-0004">4Fe-4S</keyword>
<keyword id="KW-0408">Iron</keyword>
<keyword id="KW-0411">Iron-sulfur</keyword>
<keyword id="KW-0456">Lyase</keyword>
<keyword id="KW-0479">Metal-binding</keyword>
<keyword id="KW-0535">Nitrogen fixation</keyword>
<keyword id="KW-1185">Reference proteome</keyword>
<keyword id="KW-0949">S-adenosyl-L-methionine</keyword>
<feature type="chain" id="PRO_0000447344" description="FeMo cofactor biosynthesis protein NifB">
    <location>
        <begin position="1"/>
        <end position="424"/>
    </location>
</feature>
<feature type="domain" description="Radical SAM core" evidence="3">
    <location>
        <begin position="12"/>
        <end position="261"/>
    </location>
</feature>
<feature type="binding site" evidence="1">
    <location>
        <position position="30"/>
    </location>
    <ligand>
        <name>[4Fe-4S] cluster</name>
        <dbReference type="ChEBI" id="CHEBI:49883"/>
        <label>1</label>
        <note>4Fe-4S-S-AdoMet</note>
    </ligand>
</feature>
<feature type="binding site" evidence="1">
    <location>
        <position position="34"/>
    </location>
    <ligand>
        <name>[4Fe-4S] cluster</name>
        <dbReference type="ChEBI" id="CHEBI:49883"/>
        <label>1</label>
        <note>4Fe-4S-S-AdoMet</note>
    </ligand>
</feature>
<feature type="binding site" evidence="1">
    <location>
        <position position="37"/>
    </location>
    <ligand>
        <name>[4Fe-4S] cluster</name>
        <dbReference type="ChEBI" id="CHEBI:49883"/>
        <label>1</label>
        <note>4Fe-4S-S-AdoMet</note>
    </ligand>
</feature>
<feature type="binding site" evidence="2">
    <location>
        <position position="84"/>
    </location>
    <ligand>
        <name>S-adenosyl-L-methionine</name>
        <dbReference type="ChEBI" id="CHEBI:59789"/>
    </ligand>
</feature>
<feature type="binding site" evidence="2">
    <location>
        <position position="136"/>
    </location>
    <ligand>
        <name>S-adenosyl-L-methionine</name>
        <dbReference type="ChEBI" id="CHEBI:59789"/>
    </ligand>
</feature>
<feature type="binding site" evidence="2">
    <location>
        <position position="188"/>
    </location>
    <ligand>
        <name>S-adenosyl-L-methionine</name>
        <dbReference type="ChEBI" id="CHEBI:59789"/>
    </ligand>
</feature>
<feature type="binding site" evidence="1">
    <location>
        <position position="257"/>
    </location>
    <ligand>
        <name>[4Fe-4S] cluster</name>
        <dbReference type="ChEBI" id="CHEBI:49883"/>
        <label>2</label>
    </ligand>
</feature>
<feature type="binding site" evidence="1">
    <location>
        <position position="260"/>
    </location>
    <ligand>
        <name>[4Fe-4S] cluster</name>
        <dbReference type="ChEBI" id="CHEBI:49883"/>
        <label>2</label>
    </ligand>
</feature>
<gene>
    <name evidence="5" type="primary">nifB</name>
    <name evidence="8" type="ordered locus">CT1540</name>
</gene>
<dbReference type="EC" id="4.-.-.-" evidence="7"/>
<dbReference type="EMBL" id="AE006470">
    <property type="protein sequence ID" value="AAM72766.1"/>
    <property type="molecule type" value="Genomic_DNA"/>
</dbReference>
<dbReference type="RefSeq" id="NP_662424.1">
    <property type="nucleotide sequence ID" value="NC_002932.3"/>
</dbReference>
<dbReference type="RefSeq" id="WP_010933205.1">
    <property type="nucleotide sequence ID" value="NC_002932.3"/>
</dbReference>
<dbReference type="SMR" id="Q8KC85"/>
<dbReference type="STRING" id="194439.CT1540"/>
<dbReference type="EnsemblBacteria" id="AAM72766">
    <property type="protein sequence ID" value="AAM72766"/>
    <property type="gene ID" value="CT1540"/>
</dbReference>
<dbReference type="KEGG" id="cte:CT1540"/>
<dbReference type="PATRIC" id="fig|194439.7.peg.1393"/>
<dbReference type="eggNOG" id="COG0535">
    <property type="taxonomic scope" value="Bacteria"/>
</dbReference>
<dbReference type="eggNOG" id="COG1433">
    <property type="taxonomic scope" value="Bacteria"/>
</dbReference>
<dbReference type="HOGENOM" id="CLU_027639_0_0_10"/>
<dbReference type="OrthoDB" id="9763993at2"/>
<dbReference type="UniPathway" id="UPA00782"/>
<dbReference type="Proteomes" id="UP000001007">
    <property type="component" value="Chromosome"/>
</dbReference>
<dbReference type="GO" id="GO:0051539">
    <property type="term" value="F:4 iron, 4 sulfur cluster binding"/>
    <property type="evidence" value="ECO:0007669"/>
    <property type="project" value="UniProtKB-KW"/>
</dbReference>
<dbReference type="GO" id="GO:0016829">
    <property type="term" value="F:lyase activity"/>
    <property type="evidence" value="ECO:0007669"/>
    <property type="project" value="UniProtKB-KW"/>
</dbReference>
<dbReference type="GO" id="GO:0046872">
    <property type="term" value="F:metal ion binding"/>
    <property type="evidence" value="ECO:0007669"/>
    <property type="project" value="UniProtKB-KW"/>
</dbReference>
<dbReference type="GO" id="GO:0009399">
    <property type="term" value="P:nitrogen fixation"/>
    <property type="evidence" value="ECO:0007669"/>
    <property type="project" value="UniProtKB-KW"/>
</dbReference>
<dbReference type="CDD" id="cd00852">
    <property type="entry name" value="NifB"/>
    <property type="match status" value="1"/>
</dbReference>
<dbReference type="CDD" id="cd01335">
    <property type="entry name" value="Radical_SAM"/>
    <property type="match status" value="1"/>
</dbReference>
<dbReference type="Gene3D" id="3.20.20.70">
    <property type="entry name" value="Aldolase class I"/>
    <property type="match status" value="1"/>
</dbReference>
<dbReference type="Gene3D" id="3.30.420.130">
    <property type="entry name" value="Dinitrogenase iron-molybdenum cofactor biosynthesis domain"/>
    <property type="match status" value="1"/>
</dbReference>
<dbReference type="InterPro" id="IPR013785">
    <property type="entry name" value="Aldolase_TIM"/>
</dbReference>
<dbReference type="InterPro" id="IPR003731">
    <property type="entry name" value="Di-Nase_FeMo-co_biosynth"/>
</dbReference>
<dbReference type="InterPro" id="IPR036105">
    <property type="entry name" value="DiNase_FeMo-co_biosyn_sf"/>
</dbReference>
<dbReference type="InterPro" id="IPR006638">
    <property type="entry name" value="Elp3/MiaA/NifB-like_rSAM"/>
</dbReference>
<dbReference type="InterPro" id="IPR000385">
    <property type="entry name" value="MoaA_NifB_PqqE_Fe-S-bd_CS"/>
</dbReference>
<dbReference type="InterPro" id="IPR005980">
    <property type="entry name" value="Nase_CF_NifB"/>
</dbReference>
<dbReference type="InterPro" id="IPR034165">
    <property type="entry name" value="NifB_C"/>
</dbReference>
<dbReference type="InterPro" id="IPR007197">
    <property type="entry name" value="rSAM"/>
</dbReference>
<dbReference type="NCBIfam" id="TIGR01290">
    <property type="entry name" value="nifB"/>
    <property type="match status" value="1"/>
</dbReference>
<dbReference type="PANTHER" id="PTHR43787:SF13">
    <property type="entry name" value="FEMO COFACTOR BIOSYNTHESIS PROTEIN NIFB"/>
    <property type="match status" value="1"/>
</dbReference>
<dbReference type="PANTHER" id="PTHR43787">
    <property type="entry name" value="FEMO COFACTOR BIOSYNTHESIS PROTEIN NIFB-RELATED"/>
    <property type="match status" value="1"/>
</dbReference>
<dbReference type="Pfam" id="PF02579">
    <property type="entry name" value="Nitro_FeMo-Co"/>
    <property type="match status" value="1"/>
</dbReference>
<dbReference type="Pfam" id="PF04055">
    <property type="entry name" value="Radical_SAM"/>
    <property type="match status" value="1"/>
</dbReference>
<dbReference type="SFLD" id="SFLDF00281">
    <property type="entry name" value="FeMo_cofactor_biosynthesis_pro"/>
    <property type="match status" value="1"/>
</dbReference>
<dbReference type="SFLD" id="SFLDS00029">
    <property type="entry name" value="Radical_SAM"/>
    <property type="match status" value="1"/>
</dbReference>
<dbReference type="SFLD" id="SFLDG01067">
    <property type="entry name" value="SPASM/twitch_domain_containing"/>
    <property type="match status" value="1"/>
</dbReference>
<dbReference type="SMART" id="SM00729">
    <property type="entry name" value="Elp3"/>
    <property type="match status" value="1"/>
</dbReference>
<dbReference type="SUPFAM" id="SSF53146">
    <property type="entry name" value="Nitrogenase accessory factor-like"/>
    <property type="match status" value="1"/>
</dbReference>
<dbReference type="SUPFAM" id="SSF102114">
    <property type="entry name" value="Radical SAM enzymes"/>
    <property type="match status" value="1"/>
</dbReference>
<dbReference type="PROSITE" id="PS01305">
    <property type="entry name" value="MOAA_NIFB_PQQE"/>
    <property type="match status" value="1"/>
</dbReference>
<dbReference type="PROSITE" id="PS51918">
    <property type="entry name" value="RADICAL_SAM"/>
    <property type="match status" value="1"/>
</dbReference>
<evidence type="ECO:0000250" key="1">
    <source>
        <dbReference type="UniProtKB" id="D5VRM1"/>
    </source>
</evidence>
<evidence type="ECO:0000250" key="2">
    <source>
        <dbReference type="UniProtKB" id="P69848"/>
    </source>
</evidence>
<evidence type="ECO:0000255" key="3">
    <source>
        <dbReference type="PROSITE-ProRule" id="PRU01266"/>
    </source>
</evidence>
<evidence type="ECO:0000269" key="4">
    <source>
    </source>
</evidence>
<evidence type="ECO:0000303" key="5">
    <source>
    </source>
</evidence>
<evidence type="ECO:0000305" key="6"/>
<evidence type="ECO:0000305" key="7">
    <source>
    </source>
</evidence>
<evidence type="ECO:0000312" key="8">
    <source>
        <dbReference type="EMBL" id="AAM72766.1"/>
    </source>
</evidence>
<protein>
    <recommendedName>
        <fullName evidence="7">FeMo cofactor biosynthesis protein NifB</fullName>
        <ecNumber evidence="7">4.-.-.-</ecNumber>
    </recommendedName>
    <alternativeName>
        <fullName evidence="5">FeMo-cofactor maturase NifB</fullName>
    </alternativeName>
    <alternativeName>
        <fullName>Nitrogenase cofactor maturase NifB</fullName>
    </alternativeName>
    <alternativeName>
        <fullName>Radical SAM assemblase NifB</fullName>
    </alternativeName>
</protein>
<name>NIFB_CHLTE</name>